<reference key="1">
    <citation type="journal article" date="1995" name="J. Mol. Biol.">
        <title>The mitochondrial DNA of the amoeboid protozoon, Acanthamoeba castellanii: complete sequence, gene content and genome organization.</title>
        <authorList>
            <person name="Burger G."/>
            <person name="Plante I."/>
            <person name="Lonergan K.M."/>
            <person name="Gray M.W."/>
        </authorList>
    </citation>
    <scope>NUCLEOTIDE SEQUENCE [GENOMIC DNA]</scope>
    <source>
        <strain>ATCC 30010 / Neff</strain>
    </source>
</reference>
<keyword id="KW-0496">Mitochondrion</keyword>
<keyword id="KW-0687">Ribonucleoprotein</keyword>
<keyword id="KW-0689">Ribosomal protein</keyword>
<comment type="subcellular location">
    <subcellularLocation>
        <location>Mitochondrion</location>
    </subcellularLocation>
</comment>
<comment type="similarity">
    <text evidence="1">Belongs to the universal ribosomal protein uL14 family.</text>
</comment>
<dbReference type="EMBL" id="U12386">
    <property type="protein sequence ID" value="AAD11843.1"/>
    <property type="molecule type" value="Genomic_DNA"/>
</dbReference>
<dbReference type="PIR" id="S53806">
    <property type="entry name" value="S53806"/>
</dbReference>
<dbReference type="RefSeq" id="NP_042550.1">
    <property type="nucleotide sequence ID" value="NC_001637.1"/>
</dbReference>
<dbReference type="SMR" id="P46767"/>
<dbReference type="GeneID" id="1734047"/>
<dbReference type="GO" id="GO:0005762">
    <property type="term" value="C:mitochondrial large ribosomal subunit"/>
    <property type="evidence" value="ECO:0007669"/>
    <property type="project" value="TreeGrafter"/>
</dbReference>
<dbReference type="GO" id="GO:0070180">
    <property type="term" value="F:large ribosomal subunit rRNA binding"/>
    <property type="evidence" value="ECO:0007669"/>
    <property type="project" value="TreeGrafter"/>
</dbReference>
<dbReference type="GO" id="GO:0003735">
    <property type="term" value="F:structural constituent of ribosome"/>
    <property type="evidence" value="ECO:0007669"/>
    <property type="project" value="InterPro"/>
</dbReference>
<dbReference type="GO" id="GO:0006412">
    <property type="term" value="P:translation"/>
    <property type="evidence" value="ECO:0007669"/>
    <property type="project" value="InterPro"/>
</dbReference>
<dbReference type="CDD" id="cd00337">
    <property type="entry name" value="Ribosomal_uL14"/>
    <property type="match status" value="1"/>
</dbReference>
<dbReference type="Gene3D" id="2.40.150.20">
    <property type="entry name" value="Ribosomal protein L14"/>
    <property type="match status" value="1"/>
</dbReference>
<dbReference type="HAMAP" id="MF_01367">
    <property type="entry name" value="Ribosomal_uL14"/>
    <property type="match status" value="1"/>
</dbReference>
<dbReference type="InterPro" id="IPR000218">
    <property type="entry name" value="Ribosomal_uL14"/>
</dbReference>
<dbReference type="InterPro" id="IPR036853">
    <property type="entry name" value="Ribosomal_uL14_sf"/>
</dbReference>
<dbReference type="PANTHER" id="PTHR11761">
    <property type="entry name" value="50S/60S RIBOSOMAL PROTEIN L14/L23"/>
    <property type="match status" value="1"/>
</dbReference>
<dbReference type="PANTHER" id="PTHR11761:SF3">
    <property type="entry name" value="LARGE RIBOSOMAL SUBUNIT PROTEIN UL14M"/>
    <property type="match status" value="1"/>
</dbReference>
<dbReference type="Pfam" id="PF00238">
    <property type="entry name" value="Ribosomal_L14"/>
    <property type="match status" value="1"/>
</dbReference>
<dbReference type="SMART" id="SM01374">
    <property type="entry name" value="Ribosomal_L14"/>
    <property type="match status" value="1"/>
</dbReference>
<dbReference type="SUPFAM" id="SSF50193">
    <property type="entry name" value="Ribosomal protein L14"/>
    <property type="match status" value="1"/>
</dbReference>
<geneLocation type="mitochondrion"/>
<feature type="chain" id="PRO_0000128604" description="Large ribosomal subunit protein uL14m">
    <location>
        <begin position="1"/>
        <end position="129"/>
    </location>
</feature>
<organism>
    <name type="scientific">Acanthamoeba castellanii</name>
    <name type="common">Amoeba</name>
    <dbReference type="NCBI Taxonomy" id="5755"/>
    <lineage>
        <taxon>Eukaryota</taxon>
        <taxon>Amoebozoa</taxon>
        <taxon>Discosea</taxon>
        <taxon>Longamoebia</taxon>
        <taxon>Centramoebida</taxon>
        <taxon>Acanthamoebidae</taxon>
        <taxon>Acanthamoeba</taxon>
    </lineage>
</organism>
<name>RM14_ACACA</name>
<protein>
    <recommendedName>
        <fullName evidence="1">Large ribosomal subunit protein uL14m</fullName>
    </recommendedName>
    <alternativeName>
        <fullName>60S ribosomal protein L14, mitochondrial</fullName>
    </alternativeName>
</protein>
<evidence type="ECO:0000305" key="1"/>
<sequence length="129" mass="14061">MINVQTVLKVADNSGAVFVSCIRLLNSSSRVGAGVGDTITVVVKKSIIKKNIKKSKEVKKGQVCSAVILRTIKGVKRWGNFFLRSSSNSVALINKYCLPIGSRLLGPVFREIRVNLKFSKIISIAQVTL</sequence>
<proteinExistence type="inferred from homology"/>
<gene>
    <name type="primary">RPL14</name>
</gene>
<accession>P46767</accession>